<name>PGK_PINST</name>
<proteinExistence type="evidence at protein level"/>
<reference evidence="6" key="1">
    <citation type="journal article" date="2006" name="Mol. Plant Microbe Interact.">
        <title>Proteomic comparison of needles from blister rust-resistant and susceptible Pinus strobus seedlings reveals upregulation of putative disease resistance proteins.</title>
        <authorList>
            <person name="Smith J.A."/>
            <person name="Blanchette R.A."/>
            <person name="Burnes T.A."/>
            <person name="Jacobs J.J."/>
            <person name="Higgins L."/>
            <person name="Witthuhn B.A."/>
            <person name="David A.J."/>
            <person name="Gillman J.H."/>
        </authorList>
    </citation>
    <scope>PROTEIN SEQUENCE</scope>
    <source>
        <tissue evidence="4">Leaf</tissue>
    </source>
</reference>
<keyword id="KW-0067">ATP-binding</keyword>
<keyword id="KW-0903">Direct protein sequencing</keyword>
<keyword id="KW-0418">Kinase</keyword>
<keyword id="KW-0547">Nucleotide-binding</keyword>
<keyword id="KW-0808">Transferase</keyword>
<comment type="catalytic activity">
    <reaction evidence="1">
        <text>(2R)-3-phosphoglycerate + ATP = (2R)-3-phospho-glyceroyl phosphate + ADP</text>
        <dbReference type="Rhea" id="RHEA:14801"/>
        <dbReference type="ChEBI" id="CHEBI:30616"/>
        <dbReference type="ChEBI" id="CHEBI:57604"/>
        <dbReference type="ChEBI" id="CHEBI:58272"/>
        <dbReference type="ChEBI" id="CHEBI:456216"/>
        <dbReference type="EC" id="2.7.2.3"/>
    </reaction>
</comment>
<comment type="cofactor">
    <cofactor evidence="1">
        <name>Mg(2+)</name>
        <dbReference type="ChEBI" id="CHEBI:18420"/>
    </cofactor>
</comment>
<comment type="subunit">
    <text evidence="2">Monomer.</text>
</comment>
<comment type="miscellaneous">
    <text evidence="4">On the 2D-gel the determined pI of this protein is: 5.3, its MW is: 22.1 kDa.</text>
</comment>
<comment type="similarity">
    <text evidence="3">Belongs to the phosphoglycerate kinase family.</text>
</comment>
<comment type="caution">
    <text evidence="4">The order of the peptides shown is unknown.</text>
</comment>
<organism>
    <name type="scientific">Pinus strobus</name>
    <name type="common">Eastern white pine</name>
    <dbReference type="NCBI Taxonomy" id="3348"/>
    <lineage>
        <taxon>Eukaryota</taxon>
        <taxon>Viridiplantae</taxon>
        <taxon>Streptophyta</taxon>
        <taxon>Embryophyta</taxon>
        <taxon>Tracheophyta</taxon>
        <taxon>Spermatophyta</taxon>
        <taxon>Pinopsida</taxon>
        <taxon>Pinidae</taxon>
        <taxon>Conifers I</taxon>
        <taxon>Pinales</taxon>
        <taxon>Pinaceae</taxon>
        <taxon>Pinus</taxon>
        <taxon>Pinus subgen. Strobus</taxon>
    </lineage>
</organism>
<evidence type="ECO:0000250" key="1">
    <source>
        <dbReference type="UniProtKB" id="P00558"/>
    </source>
</evidence>
<evidence type="ECO:0000250" key="2">
    <source>
        <dbReference type="UniProtKB" id="P12783"/>
    </source>
</evidence>
<evidence type="ECO:0000255" key="3"/>
<evidence type="ECO:0000269" key="4">
    <source>
    </source>
</evidence>
<evidence type="ECO:0000303" key="5">
    <source>
    </source>
</evidence>
<evidence type="ECO:0000305" key="6"/>
<feature type="chain" id="PRO_0000240612" description="Putative phosphoglycerate kinase">
    <location>
        <begin position="1" status="less than"/>
        <end position="27" status="greater than"/>
    </location>
</feature>
<feature type="non-consecutive residues" evidence="5">
    <location>
        <begin position="10"/>
        <end position="11"/>
    </location>
</feature>
<feature type="non-consecutive residues" evidence="5">
    <location>
        <begin position="20"/>
        <end position="21"/>
    </location>
</feature>
<feature type="non-terminal residue" evidence="5">
    <location>
        <position position="1"/>
    </location>
</feature>
<feature type="non-terminal residue" evidence="5">
    <location>
        <position position="27"/>
    </location>
</feature>
<accession>P84731</accession>
<protein>
    <recommendedName>
        <fullName>Putative phosphoglycerate kinase</fullName>
        <ecNumber evidence="1">2.7.2.3</ecNumber>
    </recommendedName>
    <alternativeName>
        <fullName>PS15</fullName>
    </alternativeName>
</protein>
<sequence length="27" mass="2859">FAVGTESIAKTFSEALDTTKISDVLSK</sequence>
<dbReference type="EC" id="2.7.2.3" evidence="1"/>
<dbReference type="GO" id="GO:0005524">
    <property type="term" value="F:ATP binding"/>
    <property type="evidence" value="ECO:0007669"/>
    <property type="project" value="UniProtKB-KW"/>
</dbReference>
<dbReference type="GO" id="GO:0004618">
    <property type="term" value="F:phosphoglycerate kinase activity"/>
    <property type="evidence" value="ECO:0007669"/>
    <property type="project" value="UniProtKB-EC"/>
</dbReference>